<evidence type="ECO:0000250" key="1"/>
<evidence type="ECO:0000250" key="2">
    <source>
        <dbReference type="UniProtKB" id="P62140"/>
    </source>
</evidence>
<evidence type="ECO:0000250" key="3">
    <source>
        <dbReference type="UniProtKB" id="P62141"/>
    </source>
</evidence>
<evidence type="ECO:0000256" key="4">
    <source>
        <dbReference type="SAM" id="MobiDB-lite"/>
    </source>
</evidence>
<evidence type="ECO:0000269" key="5">
    <source>
    </source>
</evidence>
<evidence type="ECO:0000305" key="6"/>
<proteinExistence type="evidence at protein level"/>
<gene>
    <name type="primary">PPP1CB</name>
</gene>
<reference key="1">
    <citation type="journal article" date="2006" name="Acta Biochim. Biophys. Sin.">
        <title>Identification of a differentially expressed gene PPP1CB between porcine Longissimus dorsi of Meishan and Large WhitexMeishan hybrids.</title>
        <authorList>
            <person name="Huang T."/>
            <person name="Xiong Y.Z."/>
            <person name="Lei M.G."/>
            <person name="Xu D.Q."/>
            <person name="Deng C.Y."/>
        </authorList>
    </citation>
    <scope>NUCLEOTIDE SEQUENCE [MRNA]</scope>
</reference>
<reference key="2">
    <citation type="submission" date="1998-08" db="EMBL/GenBank/DDBJ databases">
        <authorList>
            <person name="Eto M."/>
            <person name="Yazawa M."/>
            <person name="Chung H."/>
            <person name="Brautigan D.L."/>
        </authorList>
    </citation>
    <scope>NUCLEOTIDE SEQUENCE [MRNA]</scope>
</reference>
<reference key="3">
    <citation type="journal article" date="2007" name="J. Virol.">
        <title>The MyD116 African swine fever virus homologue interacts with the catalytic subunit of protein phosphatase 1 and activates its phosphatase activity.</title>
        <authorList>
            <person name="Rivera J."/>
            <person name="Abrams C."/>
            <person name="Hernaez B."/>
            <person name="Alcazar A."/>
            <person name="Escribano J.M."/>
            <person name="Dixon L."/>
            <person name="Alonso C."/>
        </authorList>
    </citation>
    <scope>INTERACTION WITH ASFV DP71L</scope>
</reference>
<comment type="function">
    <text evidence="1 2">Protein phosphatase that associates with over 200 regulatory proteins to form highly specific holoenzymes which dephosphorylate hundreds of biological targets. Protein phosphatase (PP1) is essential for cell division, it participates in the regulation of glycogen metabolism, muscle contractility and protein synthesis. Involved in regulation of ionic conductances and long-term synaptic plasticity. Component of the PTW/PP1 phosphatase complex, which plays a role in the control of chromatin structure and cell cycle progression during the transition from mitosis into interphase. In balance with CSNK1D and CSNK1E, determines the circadian period length, through the regulation of the speed and rhythmicity of PER1 and PER2 phosphorylation. May dephosphorylate CSNK1D and CSNK1E (By similarity). Core component of the SHOC2-MRAS-PP1c (SMP) holophosphatase complex that regulates the MAPK pathway activation (By similarity). The SMP complex specifically dephosphorylates the inhibitory phosphorylation at 'Ser-259' of RAF1 kinase, 'Ser-365' of BRAF kinase and 'Ser-214' of ARAF kinase, stimulating their kinase activities (By similarity). The SMP complex enhances the dephosphorylation activity and substrate specificity of PP1c (By similarity).</text>
</comment>
<comment type="catalytic activity">
    <reaction evidence="2">
        <text>O-phospho-L-seryl-[protein] + H2O = L-seryl-[protein] + phosphate</text>
        <dbReference type="Rhea" id="RHEA:20629"/>
        <dbReference type="Rhea" id="RHEA-COMP:9863"/>
        <dbReference type="Rhea" id="RHEA-COMP:11604"/>
        <dbReference type="ChEBI" id="CHEBI:15377"/>
        <dbReference type="ChEBI" id="CHEBI:29999"/>
        <dbReference type="ChEBI" id="CHEBI:43474"/>
        <dbReference type="ChEBI" id="CHEBI:83421"/>
        <dbReference type="EC" id="3.1.3.16"/>
    </reaction>
</comment>
<comment type="catalytic activity">
    <reaction>
        <text>O-phospho-L-threonyl-[protein] + H2O = L-threonyl-[protein] + phosphate</text>
        <dbReference type="Rhea" id="RHEA:47004"/>
        <dbReference type="Rhea" id="RHEA-COMP:11060"/>
        <dbReference type="Rhea" id="RHEA-COMP:11605"/>
        <dbReference type="ChEBI" id="CHEBI:15377"/>
        <dbReference type="ChEBI" id="CHEBI:30013"/>
        <dbReference type="ChEBI" id="CHEBI:43474"/>
        <dbReference type="ChEBI" id="CHEBI:61977"/>
        <dbReference type="EC" id="3.1.3.16"/>
    </reaction>
</comment>
<comment type="catalytic activity">
    <reaction>
        <text>O-phospho-L-seryl-[myosin light chain] + H2O = L-seryl-[myosin light chain] + phosphate</text>
        <dbReference type="Rhea" id="RHEA:12849"/>
        <dbReference type="Rhea" id="RHEA-COMP:13684"/>
        <dbReference type="Rhea" id="RHEA-COMP:13685"/>
        <dbReference type="ChEBI" id="CHEBI:15377"/>
        <dbReference type="ChEBI" id="CHEBI:29999"/>
        <dbReference type="ChEBI" id="CHEBI:43474"/>
        <dbReference type="ChEBI" id="CHEBI:83421"/>
        <dbReference type="EC" id="3.1.3.53"/>
    </reaction>
</comment>
<comment type="catalytic activity">
    <reaction>
        <text>O-phospho-L-threonyl-[myosin light chain] + H2O = L-threonyl-[myosin light chain] + phosphate</text>
        <dbReference type="Rhea" id="RHEA:53988"/>
        <dbReference type="Rhea" id="RHEA-COMP:13686"/>
        <dbReference type="Rhea" id="RHEA-COMP:13687"/>
        <dbReference type="ChEBI" id="CHEBI:15377"/>
        <dbReference type="ChEBI" id="CHEBI:30013"/>
        <dbReference type="ChEBI" id="CHEBI:43474"/>
        <dbReference type="ChEBI" id="CHEBI:61977"/>
        <dbReference type="EC" id="3.1.3.53"/>
    </reaction>
</comment>
<comment type="cofactor">
    <cofactor evidence="1">
        <name>Mn(2+)</name>
        <dbReference type="ChEBI" id="CHEBI:29035"/>
    </cofactor>
    <text evidence="1">Binds 2 manganese ions per subunit.</text>
</comment>
<comment type="activity regulation">
    <text evidence="1">Inhibited by the toxins okadaic acid, tautomycin and microcystin Leu-Arg. The phosphatase activity of the PPP1R15A-PP1 complex toward EIF2S1 is specifically inhibited by Salubrinal, a drug that protects cells from endoplasmic reticulum stress (By similarity).</text>
</comment>
<comment type="subunit">
    <text evidence="2 3">PP1 comprises a catalytic subunit, PPP1CA, PPP1CB or PPP1CC, which is folded into its native form by inhibitor 2 and glycogen synthetase kinase 3, and then complexed to one or several targeting or regulatory subunits. The targeting or regulatory subunits determine the substrate specificity of PP1. PPP1R12A, PPP1R12B and PPP1R12C mediate binding to myosin. PPP1R3A (in skeletal muscle), PPP1R3B (in liver), PPP1R3C, PPP1R3D and PPP1R3F (in brain) mediate binding to glycogen. PPP1R15A and PPP1R15B mediate binding to EIF2S1. Part of a complex containing PPP1R15B, PP1 and NCK1/2. Interacts with PPP1R7 and PPP1R12C. Interacts with PPP1R16B. Component of the PTW/PP1 phosphatase complex, composed of PPP1R10/PNUTS, TOX4, WDR82, and PPP1CA or PPP1CB or PPP1CC. Interacts with PPP1R8. Interacts with PPP1R12A and NUAK1; the interaction is direct. Interacts with TRIM28; the interaction dephosphorylates TRIM28 on 'Ser-824'. Interacts with FOXP3 (By similarity). Interacts with RRP1B (By similarity). Interacts with SERPINE1. Interacts with LZTR1 (By similarity). Component of the SHOC2-MRAS-PP1c (SMP) complex consisting of SHOC2, GTP-bound M-Ras/MRAS and the catalytic subunit of protein phosphatase 1 (either PPP1CA, PPP1CB or PPP1CC) (By similarity). SHOC2 and PP1c preferably bind M-Ras/MRAS, but they also bind K-Ras/KRAS, N-Ras/NRAS and H-Ras/HRAS; these interactions are GTP-dependent and both SHOC2 and PP1c are required to form a stable complex (By similarity). Interacts with SHOC2 in the absence of Ras GTPases (By similarity).</text>
</comment>
<comment type="subunit">
    <text evidence="5">(Microbial infection) Interacts with African swine fever virus (ASFV) protein DP71L.</text>
</comment>
<comment type="subcellular location">
    <subcellularLocation>
        <location evidence="2">Cytoplasm</location>
    </subcellularLocation>
    <subcellularLocation>
        <location evidence="2">Nucleus</location>
    </subcellularLocation>
    <subcellularLocation>
        <location evidence="2">Nucleus</location>
        <location evidence="2">Nucleoplasm</location>
    </subcellularLocation>
    <subcellularLocation>
        <location evidence="2">Nucleus</location>
        <location evidence="2">Nucleolus</location>
    </subcellularLocation>
    <text evidence="2">Highly mobile in cells and can be relocalized through interaction with targeting subunits. In the presence of PPP1R8 relocalizes from the nucleus to nuclear speckles.</text>
</comment>
<comment type="similarity">
    <text evidence="6">Belongs to the PPP phosphatase family. PP-1 subfamily.</text>
</comment>
<comment type="online information" name="Protein Spotlight">
    <link uri="https://www.proteinspotlight.org/back_issues/032"/>
    <text>The things we forget - Issue 32 of March 2003</text>
</comment>
<protein>
    <recommendedName>
        <fullName>Serine/threonine-protein phosphatase PP1-beta catalytic subunit</fullName>
        <shortName>PP-1B</shortName>
        <ecNumber evidence="2">3.1.3.16</ecNumber>
        <ecNumber>3.1.3.53</ecNumber>
    </recommendedName>
</protein>
<sequence length="327" mass="37187">MADGELNVDSLITRLLEVRGCRPGKIVQMTEAEVRGLCIKSREIFLSQPILLELEAPLKICGDIHGQYTDLLRLFEYGGFPPEANYLFLGDYVDRGKQSLETICLLLAYKIKYPENFFLLRGNHECASINRIYGFYDECKRRFNIKLWKTFTDCFNCLPIAAIVDEKIFCCHGGLSPDLQSMEQIRRIMRPTDVPDTGLLCDLLWSDPDKDVQGWGENDRGVSFTFGADVVSKFLNRHDLDLICRAHQVVEDGYEFFAKRQLVTLFSAPNYCGEFDNAGGMMSVDETLMCSFQILKPSEKKAKYQYGGLNSGRPVTPPRTANPPKKR</sequence>
<organism>
    <name type="scientific">Sus scrofa</name>
    <name type="common">Pig</name>
    <dbReference type="NCBI Taxonomy" id="9823"/>
    <lineage>
        <taxon>Eukaryota</taxon>
        <taxon>Metazoa</taxon>
        <taxon>Chordata</taxon>
        <taxon>Craniata</taxon>
        <taxon>Vertebrata</taxon>
        <taxon>Euteleostomi</taxon>
        <taxon>Mammalia</taxon>
        <taxon>Eutheria</taxon>
        <taxon>Laurasiatheria</taxon>
        <taxon>Artiodactyla</taxon>
        <taxon>Suina</taxon>
        <taxon>Suidae</taxon>
        <taxon>Sus</taxon>
    </lineage>
</organism>
<dbReference type="EC" id="3.1.3.16" evidence="2"/>
<dbReference type="EC" id="3.1.3.53"/>
<dbReference type="EMBL" id="DQ396471">
    <property type="protein sequence ID" value="ABD65256.1"/>
    <property type="molecule type" value="mRNA"/>
</dbReference>
<dbReference type="EMBL" id="AB016735">
    <property type="protein sequence ID" value="BAA32238.1"/>
    <property type="molecule type" value="mRNA"/>
</dbReference>
<dbReference type="RefSeq" id="NP_999349.1">
    <property type="nucleotide sequence ID" value="NM_214184.2"/>
</dbReference>
<dbReference type="RefSeq" id="XP_020941515.1">
    <property type="nucleotide sequence ID" value="XM_021085856.1"/>
</dbReference>
<dbReference type="RefSeq" id="XP_020941516.1">
    <property type="nucleotide sequence ID" value="XM_021085857.1"/>
</dbReference>
<dbReference type="SMR" id="P61292"/>
<dbReference type="FunCoup" id="P61292">
    <property type="interactions" value="2029"/>
</dbReference>
<dbReference type="STRING" id="9823.ENSSSCP00000050441"/>
<dbReference type="GlyGen" id="P61292">
    <property type="glycosylation" value="1 site"/>
</dbReference>
<dbReference type="PaxDb" id="9823-ENSSSCP00000009105"/>
<dbReference type="PeptideAtlas" id="P61292"/>
<dbReference type="Ensembl" id="ENSSSCT00000051822.3">
    <property type="protein sequence ID" value="ENSSSCP00000050926.1"/>
    <property type="gene ID" value="ENSSSCG00000008540.5"/>
</dbReference>
<dbReference type="Ensembl" id="ENSSSCT00025063729.1">
    <property type="protein sequence ID" value="ENSSSCP00025027174.1"/>
    <property type="gene ID" value="ENSSSCG00025046860.1"/>
</dbReference>
<dbReference type="Ensembl" id="ENSSSCT00030045151.1">
    <property type="protein sequence ID" value="ENSSSCP00030020286.1"/>
    <property type="gene ID" value="ENSSSCG00030032671.1"/>
</dbReference>
<dbReference type="Ensembl" id="ENSSSCT00035079436.1">
    <property type="protein sequence ID" value="ENSSSCP00035032622.1"/>
    <property type="gene ID" value="ENSSSCG00035059293.1"/>
</dbReference>
<dbReference type="Ensembl" id="ENSSSCT00040030501.1">
    <property type="protein sequence ID" value="ENSSSCP00040012733.1"/>
    <property type="gene ID" value="ENSSSCG00040022736.1"/>
</dbReference>
<dbReference type="Ensembl" id="ENSSSCT00045003527.1">
    <property type="protein sequence ID" value="ENSSSCP00045002223.1"/>
    <property type="gene ID" value="ENSSSCG00045002206.1"/>
</dbReference>
<dbReference type="Ensembl" id="ENSSSCT00050060254.1">
    <property type="protein sequence ID" value="ENSSSCP00050025909.1"/>
    <property type="gene ID" value="ENSSSCG00050044249.1"/>
</dbReference>
<dbReference type="Ensembl" id="ENSSSCT00055008384.1">
    <property type="protein sequence ID" value="ENSSSCP00055006633.1"/>
    <property type="gene ID" value="ENSSSCG00055004233.1"/>
</dbReference>
<dbReference type="Ensembl" id="ENSSSCT00060079832.1">
    <property type="protein sequence ID" value="ENSSSCP00060034554.1"/>
    <property type="gene ID" value="ENSSSCG00060058519.1"/>
</dbReference>
<dbReference type="Ensembl" id="ENSSSCT00065017773.1">
    <property type="protein sequence ID" value="ENSSSCP00065007245.1"/>
    <property type="gene ID" value="ENSSSCG00065013367.1"/>
</dbReference>
<dbReference type="Ensembl" id="ENSSSCT00070018756.1">
    <property type="protein sequence ID" value="ENSSSCP00070015577.1"/>
    <property type="gene ID" value="ENSSSCG00070009590.1"/>
</dbReference>
<dbReference type="Ensembl" id="ENSSSCT00070018771.1">
    <property type="protein sequence ID" value="ENSSSCP00070015589.1"/>
    <property type="gene ID" value="ENSSSCG00070009590.1"/>
</dbReference>
<dbReference type="Ensembl" id="ENSSSCT00070018795.1">
    <property type="protein sequence ID" value="ENSSSCP00070015610.1"/>
    <property type="gene ID" value="ENSSSCG00070009590.1"/>
</dbReference>
<dbReference type="Ensembl" id="ENSSSCT00085028824">
    <property type="protein sequence ID" value="ENSSSCP00085019776"/>
    <property type="gene ID" value="ENSSSCG00085015203"/>
</dbReference>
<dbReference type="Ensembl" id="ENSSSCT00090056100">
    <property type="protein sequence ID" value="ENSSSCP00090035038"/>
    <property type="gene ID" value="ENSSSCG00090031580"/>
</dbReference>
<dbReference type="Ensembl" id="ENSSSCT00105048617">
    <property type="protein sequence ID" value="ENSSSCP00105034115"/>
    <property type="gene ID" value="ENSSSCG00105025421"/>
</dbReference>
<dbReference type="Ensembl" id="ENSSSCT00110011123">
    <property type="protein sequence ID" value="ENSSSCP00110007908"/>
    <property type="gene ID" value="ENSSSCG00110005605"/>
</dbReference>
<dbReference type="Ensembl" id="ENSSSCT00115020402">
    <property type="protein sequence ID" value="ENSSSCP00115019326"/>
    <property type="gene ID" value="ENSSSCG00115010086"/>
</dbReference>
<dbReference type="Ensembl" id="ENSSSCT00130021021">
    <property type="protein sequence ID" value="ENSSSCP00130014420"/>
    <property type="gene ID" value="ENSSSCG00130011009"/>
</dbReference>
<dbReference type="GeneID" id="397378"/>
<dbReference type="KEGG" id="ssc:397378"/>
<dbReference type="CTD" id="5500"/>
<dbReference type="VGNC" id="VGNC:109478">
    <property type="gene designation" value="PPP1CB"/>
</dbReference>
<dbReference type="eggNOG" id="KOG0374">
    <property type="taxonomic scope" value="Eukaryota"/>
</dbReference>
<dbReference type="GeneTree" id="ENSGT00940000154644"/>
<dbReference type="InParanoid" id="P61292"/>
<dbReference type="OMA" id="TVQMSEN"/>
<dbReference type="OrthoDB" id="1930084at2759"/>
<dbReference type="BRENDA" id="3.1.3.16">
    <property type="organism ID" value="6170"/>
</dbReference>
<dbReference type="Reactome" id="R-SSC-2565942">
    <property type="pathway name" value="Regulation of PLK1 Activity at G2/M Transition"/>
</dbReference>
<dbReference type="Reactome" id="R-SSC-5625740">
    <property type="pathway name" value="RHO GTPases activate PKNs"/>
</dbReference>
<dbReference type="Reactome" id="R-SSC-5627123">
    <property type="pathway name" value="RHO GTPases activate PAKs"/>
</dbReference>
<dbReference type="Reactome" id="R-SSC-5673000">
    <property type="pathway name" value="RAF activation"/>
</dbReference>
<dbReference type="Proteomes" id="UP000008227">
    <property type="component" value="Chromosome 3"/>
</dbReference>
<dbReference type="Proteomes" id="UP000314985">
    <property type="component" value="Chromosome 3"/>
</dbReference>
<dbReference type="Proteomes" id="UP000694570">
    <property type="component" value="Unplaced"/>
</dbReference>
<dbReference type="Proteomes" id="UP000694571">
    <property type="component" value="Unplaced"/>
</dbReference>
<dbReference type="Proteomes" id="UP000694720">
    <property type="component" value="Unplaced"/>
</dbReference>
<dbReference type="Proteomes" id="UP000694722">
    <property type="component" value="Unplaced"/>
</dbReference>
<dbReference type="Proteomes" id="UP000694723">
    <property type="component" value="Unplaced"/>
</dbReference>
<dbReference type="Proteomes" id="UP000694724">
    <property type="component" value="Unplaced"/>
</dbReference>
<dbReference type="Proteomes" id="UP000694725">
    <property type="component" value="Unplaced"/>
</dbReference>
<dbReference type="Proteomes" id="UP000694726">
    <property type="component" value="Unplaced"/>
</dbReference>
<dbReference type="Proteomes" id="UP000694727">
    <property type="component" value="Unplaced"/>
</dbReference>
<dbReference type="Proteomes" id="UP000694728">
    <property type="component" value="Unplaced"/>
</dbReference>
<dbReference type="Bgee" id="ENSSSCG00000008540">
    <property type="expression patterns" value="Expressed in Ammon's horn and 45 other cell types or tissues"/>
</dbReference>
<dbReference type="ExpressionAtlas" id="P61292">
    <property type="expression patterns" value="baseline and differential"/>
</dbReference>
<dbReference type="GO" id="GO:0005737">
    <property type="term" value="C:cytoplasm"/>
    <property type="evidence" value="ECO:0000318"/>
    <property type="project" value="GO_Central"/>
</dbReference>
<dbReference type="GO" id="GO:0005730">
    <property type="term" value="C:nucleolus"/>
    <property type="evidence" value="ECO:0007669"/>
    <property type="project" value="UniProtKB-SubCell"/>
</dbReference>
<dbReference type="GO" id="GO:0005654">
    <property type="term" value="C:nucleoplasm"/>
    <property type="evidence" value="ECO:0007669"/>
    <property type="project" value="UniProtKB-SubCell"/>
</dbReference>
<dbReference type="GO" id="GO:0005634">
    <property type="term" value="C:nucleus"/>
    <property type="evidence" value="ECO:0000318"/>
    <property type="project" value="GO_Central"/>
</dbReference>
<dbReference type="GO" id="GO:0072357">
    <property type="term" value="C:PTW/PP1 phosphatase complex"/>
    <property type="evidence" value="ECO:0000250"/>
    <property type="project" value="UniProtKB"/>
</dbReference>
<dbReference type="GO" id="GO:0046872">
    <property type="term" value="F:metal ion binding"/>
    <property type="evidence" value="ECO:0007669"/>
    <property type="project" value="UniProtKB-KW"/>
</dbReference>
<dbReference type="GO" id="GO:0017018">
    <property type="term" value="F:myosin phosphatase activity"/>
    <property type="evidence" value="ECO:0000250"/>
    <property type="project" value="UniProtKB"/>
</dbReference>
<dbReference type="GO" id="GO:0050115">
    <property type="term" value="F:myosin-light-chain-phosphatase activity"/>
    <property type="evidence" value="ECO:0000250"/>
    <property type="project" value="UniProtKB"/>
</dbReference>
<dbReference type="GO" id="GO:0016791">
    <property type="term" value="F:phosphatase activity"/>
    <property type="evidence" value="ECO:0000250"/>
    <property type="project" value="UniProtKB"/>
</dbReference>
<dbReference type="GO" id="GO:0004722">
    <property type="term" value="F:protein serine/threonine phosphatase activity"/>
    <property type="evidence" value="ECO:0000318"/>
    <property type="project" value="GO_Central"/>
</dbReference>
<dbReference type="GO" id="GO:0051301">
    <property type="term" value="P:cell division"/>
    <property type="evidence" value="ECO:0007669"/>
    <property type="project" value="UniProtKB-KW"/>
</dbReference>
<dbReference type="GO" id="GO:0032922">
    <property type="term" value="P:circadian regulation of gene expression"/>
    <property type="evidence" value="ECO:0000250"/>
    <property type="project" value="UniProtKB"/>
</dbReference>
<dbReference type="GO" id="GO:0043153">
    <property type="term" value="P:entrainment of circadian clock by photoperiod"/>
    <property type="evidence" value="ECO:0000250"/>
    <property type="project" value="UniProtKB"/>
</dbReference>
<dbReference type="GO" id="GO:0005977">
    <property type="term" value="P:glycogen metabolic process"/>
    <property type="evidence" value="ECO:0007669"/>
    <property type="project" value="UniProtKB-KW"/>
</dbReference>
<dbReference type="GO" id="GO:0006470">
    <property type="term" value="P:protein dephosphorylation"/>
    <property type="evidence" value="ECO:0000250"/>
    <property type="project" value="UniProtKB"/>
</dbReference>
<dbReference type="GO" id="GO:0030155">
    <property type="term" value="P:regulation of cell adhesion"/>
    <property type="evidence" value="ECO:0000250"/>
    <property type="project" value="UniProtKB"/>
</dbReference>
<dbReference type="GO" id="GO:0042752">
    <property type="term" value="P:regulation of circadian rhythm"/>
    <property type="evidence" value="ECO:0000250"/>
    <property type="project" value="UniProtKB"/>
</dbReference>
<dbReference type="CDD" id="cd07414">
    <property type="entry name" value="MPP_PP1_PPKL"/>
    <property type="match status" value="1"/>
</dbReference>
<dbReference type="FunFam" id="3.60.21.10:FF:000007">
    <property type="entry name" value="Serine/threonine-protein phosphatase"/>
    <property type="match status" value="1"/>
</dbReference>
<dbReference type="Gene3D" id="3.60.21.10">
    <property type="match status" value="1"/>
</dbReference>
<dbReference type="InterPro" id="IPR004843">
    <property type="entry name" value="Calcineurin-like_PHP_ApaH"/>
</dbReference>
<dbReference type="InterPro" id="IPR029052">
    <property type="entry name" value="Metallo-depent_PP-like"/>
</dbReference>
<dbReference type="InterPro" id="IPR050341">
    <property type="entry name" value="PP1_catalytic_subunit"/>
</dbReference>
<dbReference type="InterPro" id="IPR006186">
    <property type="entry name" value="Ser/Thr-sp_prot-phosphatase"/>
</dbReference>
<dbReference type="InterPro" id="IPR031675">
    <property type="entry name" value="STPPase_N"/>
</dbReference>
<dbReference type="PANTHER" id="PTHR11668">
    <property type="entry name" value="SERINE/THREONINE PROTEIN PHOSPHATASE"/>
    <property type="match status" value="1"/>
</dbReference>
<dbReference type="PANTHER" id="PTHR11668:SF472">
    <property type="entry name" value="SERINE_THREONINE-PROTEIN PHOSPHATASE PP1-BETA CATALYTIC SUBUNIT"/>
    <property type="match status" value="1"/>
</dbReference>
<dbReference type="Pfam" id="PF00149">
    <property type="entry name" value="Metallophos"/>
    <property type="match status" value="1"/>
</dbReference>
<dbReference type="Pfam" id="PF16891">
    <property type="entry name" value="STPPase_N"/>
    <property type="match status" value="1"/>
</dbReference>
<dbReference type="PRINTS" id="PR00114">
    <property type="entry name" value="STPHPHTASE"/>
</dbReference>
<dbReference type="SMART" id="SM00156">
    <property type="entry name" value="PP2Ac"/>
    <property type="match status" value="1"/>
</dbReference>
<dbReference type="SUPFAM" id="SSF56300">
    <property type="entry name" value="Metallo-dependent phosphatases"/>
    <property type="match status" value="1"/>
</dbReference>
<dbReference type="PROSITE" id="PS00125">
    <property type="entry name" value="SER_THR_PHOSPHATASE"/>
    <property type="match status" value="1"/>
</dbReference>
<accession>P61292</accession>
<accession>Q20BD5</accession>
<keyword id="KW-0007">Acetylation</keyword>
<keyword id="KW-0090">Biological rhythms</keyword>
<keyword id="KW-0119">Carbohydrate metabolism</keyword>
<keyword id="KW-0131">Cell cycle</keyword>
<keyword id="KW-0132">Cell division</keyword>
<keyword id="KW-0963">Cytoplasm</keyword>
<keyword id="KW-0321">Glycogen metabolism</keyword>
<keyword id="KW-0378">Hydrolase</keyword>
<keyword id="KW-0464">Manganese</keyword>
<keyword id="KW-0479">Metal-binding</keyword>
<keyword id="KW-0539">Nucleus</keyword>
<keyword id="KW-0597">Phosphoprotein</keyword>
<keyword id="KW-0904">Protein phosphatase</keyword>
<keyword id="KW-1185">Reference proteome</keyword>
<name>PP1B_PIG</name>
<feature type="initiator methionine" description="Removed" evidence="2">
    <location>
        <position position="1"/>
    </location>
</feature>
<feature type="chain" id="PRO_0000058781" description="Serine/threonine-protein phosphatase PP1-beta catalytic subunit">
    <location>
        <begin position="2"/>
        <end position="327"/>
    </location>
</feature>
<feature type="region of interest" description="Disordered" evidence="4">
    <location>
        <begin position="305"/>
        <end position="327"/>
    </location>
</feature>
<feature type="active site" description="Proton donor" evidence="1">
    <location>
        <position position="124"/>
    </location>
</feature>
<feature type="binding site" evidence="1">
    <location>
        <position position="63"/>
    </location>
    <ligand>
        <name>Mn(2+)</name>
        <dbReference type="ChEBI" id="CHEBI:29035"/>
        <label>1</label>
    </ligand>
</feature>
<feature type="binding site" evidence="1">
    <location>
        <position position="65"/>
    </location>
    <ligand>
        <name>Mn(2+)</name>
        <dbReference type="ChEBI" id="CHEBI:29035"/>
        <label>1</label>
    </ligand>
</feature>
<feature type="binding site" evidence="1">
    <location>
        <position position="91"/>
    </location>
    <ligand>
        <name>Mn(2+)</name>
        <dbReference type="ChEBI" id="CHEBI:29035"/>
        <label>1</label>
    </ligand>
</feature>
<feature type="binding site" evidence="1">
    <location>
        <position position="91"/>
    </location>
    <ligand>
        <name>Mn(2+)</name>
        <dbReference type="ChEBI" id="CHEBI:29035"/>
        <label>2</label>
    </ligand>
</feature>
<feature type="binding site" evidence="1">
    <location>
        <position position="123"/>
    </location>
    <ligand>
        <name>Mn(2+)</name>
        <dbReference type="ChEBI" id="CHEBI:29035"/>
        <label>2</label>
    </ligand>
</feature>
<feature type="binding site" evidence="1">
    <location>
        <position position="172"/>
    </location>
    <ligand>
        <name>Mn(2+)</name>
        <dbReference type="ChEBI" id="CHEBI:29035"/>
        <label>2</label>
    </ligand>
</feature>
<feature type="binding site" evidence="1">
    <location>
        <position position="247"/>
    </location>
    <ligand>
        <name>Mn(2+)</name>
        <dbReference type="ChEBI" id="CHEBI:29035"/>
        <label>2</label>
    </ligand>
</feature>
<feature type="modified residue" description="N-acetylalanine" evidence="2">
    <location>
        <position position="2"/>
    </location>
</feature>
<feature type="modified residue" description="Phosphothreonine" evidence="2">
    <location>
        <position position="316"/>
    </location>
</feature>